<dbReference type="EC" id="3.1.2.-" evidence="1"/>
<dbReference type="EMBL" id="FN543093">
    <property type="protein sequence ID" value="CBA32696.1"/>
    <property type="molecule type" value="Genomic_DNA"/>
</dbReference>
<dbReference type="SMR" id="C9XXI1"/>
<dbReference type="KEGG" id="ctu:CTU_30430"/>
<dbReference type="PATRIC" id="fig|693216.3.peg.2880"/>
<dbReference type="HOGENOM" id="CLU_089876_13_1_6"/>
<dbReference type="UniPathway" id="UPA00017"/>
<dbReference type="Proteomes" id="UP000002069">
    <property type="component" value="Chromosome"/>
</dbReference>
<dbReference type="GO" id="GO:0005829">
    <property type="term" value="C:cytosol"/>
    <property type="evidence" value="ECO:0007669"/>
    <property type="project" value="TreeGrafter"/>
</dbReference>
<dbReference type="GO" id="GO:0061522">
    <property type="term" value="F:1,4-dihydroxy-2-naphthoyl-CoA thioesterase activity"/>
    <property type="evidence" value="ECO:0007669"/>
    <property type="project" value="TreeGrafter"/>
</dbReference>
<dbReference type="GO" id="GO:0009239">
    <property type="term" value="P:enterobactin biosynthetic process"/>
    <property type="evidence" value="ECO:0007669"/>
    <property type="project" value="UniProtKB-UniRule"/>
</dbReference>
<dbReference type="CDD" id="cd03443">
    <property type="entry name" value="PaaI_thioesterase"/>
    <property type="match status" value="1"/>
</dbReference>
<dbReference type="FunFam" id="3.10.129.10:FF:000002">
    <property type="entry name" value="1,4-dihydroxy-2-naphthoyl-CoA hydrolase"/>
    <property type="match status" value="1"/>
</dbReference>
<dbReference type="Gene3D" id="3.10.129.10">
    <property type="entry name" value="Hotdog Thioesterase"/>
    <property type="match status" value="1"/>
</dbReference>
<dbReference type="HAMAP" id="MF_00907">
    <property type="entry name" value="Thioesterase_EntH"/>
    <property type="match status" value="1"/>
</dbReference>
<dbReference type="InterPro" id="IPR029069">
    <property type="entry name" value="HotDog_dom_sf"/>
</dbReference>
<dbReference type="InterPro" id="IPR003736">
    <property type="entry name" value="PAAI_dom"/>
</dbReference>
<dbReference type="InterPro" id="IPR026576">
    <property type="entry name" value="Thioesterase_EntH"/>
</dbReference>
<dbReference type="InterPro" id="IPR006683">
    <property type="entry name" value="Thioestr_dom"/>
</dbReference>
<dbReference type="NCBIfam" id="NF007607">
    <property type="entry name" value="PRK10254.1"/>
    <property type="match status" value="1"/>
</dbReference>
<dbReference type="NCBIfam" id="TIGR00369">
    <property type="entry name" value="unchar_dom_1"/>
    <property type="match status" value="1"/>
</dbReference>
<dbReference type="PANTHER" id="PTHR43240">
    <property type="entry name" value="1,4-DIHYDROXY-2-NAPHTHOYL-COA THIOESTERASE 1"/>
    <property type="match status" value="1"/>
</dbReference>
<dbReference type="PANTHER" id="PTHR43240:SF9">
    <property type="entry name" value="PROOFREADING THIOESTERASE ENTH"/>
    <property type="match status" value="1"/>
</dbReference>
<dbReference type="Pfam" id="PF03061">
    <property type="entry name" value="4HBT"/>
    <property type="match status" value="1"/>
</dbReference>
<dbReference type="SUPFAM" id="SSF54637">
    <property type="entry name" value="Thioesterase/thiol ester dehydrase-isomerase"/>
    <property type="match status" value="1"/>
</dbReference>
<organism>
    <name type="scientific">Cronobacter turicensis (strain DSM 18703 / CCUG 55852 / LMG 23827 / z3032)</name>
    <dbReference type="NCBI Taxonomy" id="693216"/>
    <lineage>
        <taxon>Bacteria</taxon>
        <taxon>Pseudomonadati</taxon>
        <taxon>Pseudomonadota</taxon>
        <taxon>Gammaproteobacteria</taxon>
        <taxon>Enterobacterales</taxon>
        <taxon>Enterobacteriaceae</taxon>
        <taxon>Cronobacter</taxon>
    </lineage>
</organism>
<protein>
    <recommendedName>
        <fullName evidence="1">Proofreading thioesterase EntH</fullName>
        <ecNumber evidence="1">3.1.2.-</ecNumber>
    </recommendedName>
    <alternativeName>
        <fullName evidence="1">Enterobactin synthase component H</fullName>
    </alternativeName>
</protein>
<gene>
    <name evidence="1" type="primary">entH</name>
    <name type="ordered locus">Ctu_30430</name>
</gene>
<evidence type="ECO:0000255" key="1">
    <source>
        <dbReference type="HAMAP-Rule" id="MF_00907"/>
    </source>
</evidence>
<comment type="function">
    <text evidence="1">Required for optimal enterobactin synthesis. Acts as a proofreading enzyme that prevents EntB misacylation by hydrolyzing the thioester bound existing between EntB and wrongly charged molecules.</text>
</comment>
<comment type="pathway">
    <text evidence="1">Siderophore biosynthesis; enterobactin biosynthesis.</text>
</comment>
<comment type="subunit">
    <text evidence="1">Homotetramer. Dimer of dimers. Interacts specifically with the aryl carrier protein (ArCP) domain of EntB.</text>
</comment>
<comment type="subcellular location">
    <subcellularLocation>
        <location evidence="1">Cytoplasm</location>
    </subcellularLocation>
</comment>
<comment type="similarity">
    <text evidence="1">Belongs to the thioesterase PaaI family.</text>
</comment>
<reference key="1">
    <citation type="journal article" date="2011" name="J. Bacteriol.">
        <title>Complete genome sequence of Cronobacter turicensis LMG 23827, a food-borne pathogen causing deaths in neonates.</title>
        <authorList>
            <person name="Stephan R."/>
            <person name="Lehner A."/>
            <person name="Tischler P."/>
            <person name="Rattei T."/>
        </authorList>
    </citation>
    <scope>NUCLEOTIDE SEQUENCE [LARGE SCALE GENOMIC DNA]</scope>
    <source>
        <strain>DSM 18703 / CCUG 55852 / LMG 23827 / z3032</strain>
    </source>
</reference>
<name>ENTH_CROTZ</name>
<proteinExistence type="inferred from homology"/>
<keyword id="KW-0963">Cytoplasm</keyword>
<keyword id="KW-0378">Hydrolase</keyword>
<feature type="chain" id="PRO_0000413864" description="Proofreading thioesterase EntH">
    <location>
        <begin position="1"/>
        <end position="137"/>
    </location>
</feature>
<feature type="active site" description="Nucleophile or proton acceptor" evidence="1">
    <location>
        <position position="63"/>
    </location>
</feature>
<accession>C9XXI1</accession>
<sequence>MIWKRHMTLEALNATSVGTLVEHLGIEYTRLGDDLLEATMPVDTRTHQPFGLLHGGASAALAETLGSMAGYLTTRDGQCVVGTEISASHHRAVSQGQVRGVCQPLHLGRQSQCWEIVIYDEQGRRCCTSRLSTAVMG</sequence>